<reference key="1">
    <citation type="journal article" date="2003" name="Genome Res.">
        <title>Comparative complete genome sequence analysis of the amino acid replacements responsible for the thermostability of Corynebacterium efficiens.</title>
        <authorList>
            <person name="Nishio Y."/>
            <person name="Nakamura Y."/>
            <person name="Kawarabayasi Y."/>
            <person name="Usuda Y."/>
            <person name="Kimura E."/>
            <person name="Sugimoto S."/>
            <person name="Matsui K."/>
            <person name="Yamagishi A."/>
            <person name="Kikuchi H."/>
            <person name="Ikeo K."/>
            <person name="Gojobori T."/>
        </authorList>
    </citation>
    <scope>NUCLEOTIDE SEQUENCE [LARGE SCALE GENOMIC DNA]</scope>
    <source>
        <strain>DSM 44549 / YS-314 / AJ 12310 / JCM 11189 / NBRC 100395</strain>
    </source>
</reference>
<sequence>MTFVIADRYELGASIGSGGMSEVFAATDLLIGREVAVKMLRTDLAKDVNFRERFRREAQNAGKLSHPSIVAVFDTGEVDRDGISVPYIVMERVHGRDLRDIVREDGPYSPSQAATIMIPVCHALQSSHEAGIIHRDVKPANIMINNTGGVKVMDFGIARALDDSTSAMTQTAAVIGTAQYLSPEQARGKPADARSDVYAAGCVLYELVTGRPPFEGESPFAVAYQHVQEEPTPPSEYISDLSPTAALNVDAVVLTAMAKHPADRYQTAAEMAADLELLSRNAVSRAARAHVEKPDEPETVVVPQRLSTPPPPPTPAMPAATVAAPAAAPTAVGSRPAAARQPKRGSRALTVLAIVLTLGVIGVGGAFTYDFLSNSSSASTQQIPNIVGLPENEAVLELERLGFTVVLTTEPSPDVAEGLVIRTSPNVGSEIREGATVTLTISSGREVVTIPDVTGLTLAEATREIEGAGLVLDQSIREENSDDYPAGTVIQQNPRAGGETSVGASITLTVSTGPSLVRVPVITGMQWSQAESNITSLGLVPDIYYVDSLLPEGQVISASGQGTELPRGSTVTVEISNGMLIEAPDLARLDVDNALKALRDAGWTAPDTSLIEGAPIPTGALVDQGRIGFQDPSPGQPLRKDAVVNIRLYRFDLTALVPEP</sequence>
<name>PKN1_COREF</name>
<accession>Q8FUI5</accession>
<protein>
    <recommendedName>
        <fullName>Probable serine/threonine-protein kinase CE0033</fullName>
        <ecNumber>2.7.11.1</ecNumber>
    </recommendedName>
</protein>
<comment type="catalytic activity">
    <reaction>
        <text>L-seryl-[protein] + ATP = O-phospho-L-seryl-[protein] + ADP + H(+)</text>
        <dbReference type="Rhea" id="RHEA:17989"/>
        <dbReference type="Rhea" id="RHEA-COMP:9863"/>
        <dbReference type="Rhea" id="RHEA-COMP:11604"/>
        <dbReference type="ChEBI" id="CHEBI:15378"/>
        <dbReference type="ChEBI" id="CHEBI:29999"/>
        <dbReference type="ChEBI" id="CHEBI:30616"/>
        <dbReference type="ChEBI" id="CHEBI:83421"/>
        <dbReference type="ChEBI" id="CHEBI:456216"/>
        <dbReference type="EC" id="2.7.11.1"/>
    </reaction>
</comment>
<comment type="catalytic activity">
    <reaction>
        <text>L-threonyl-[protein] + ATP = O-phospho-L-threonyl-[protein] + ADP + H(+)</text>
        <dbReference type="Rhea" id="RHEA:46608"/>
        <dbReference type="Rhea" id="RHEA-COMP:11060"/>
        <dbReference type="Rhea" id="RHEA-COMP:11605"/>
        <dbReference type="ChEBI" id="CHEBI:15378"/>
        <dbReference type="ChEBI" id="CHEBI:30013"/>
        <dbReference type="ChEBI" id="CHEBI:30616"/>
        <dbReference type="ChEBI" id="CHEBI:61977"/>
        <dbReference type="ChEBI" id="CHEBI:456216"/>
        <dbReference type="EC" id="2.7.11.1"/>
    </reaction>
</comment>
<comment type="similarity">
    <text evidence="1">Belongs to the protein kinase superfamily. Ser/Thr protein kinase family.</text>
</comment>
<dbReference type="EC" id="2.7.11.1"/>
<dbReference type="EMBL" id="BA000035">
    <property type="protein sequence ID" value="BAC16843.1"/>
    <property type="molecule type" value="Genomic_DNA"/>
</dbReference>
<dbReference type="RefSeq" id="WP_006768658.1">
    <property type="nucleotide sequence ID" value="NC_004369.1"/>
</dbReference>
<dbReference type="SMR" id="Q8FUI5"/>
<dbReference type="STRING" id="196164.gene:10740422"/>
<dbReference type="KEGG" id="cef:CE0033"/>
<dbReference type="eggNOG" id="COG0515">
    <property type="taxonomic scope" value="Bacteria"/>
</dbReference>
<dbReference type="eggNOG" id="COG2815">
    <property type="taxonomic scope" value="Bacteria"/>
</dbReference>
<dbReference type="HOGENOM" id="CLU_000288_135_2_11"/>
<dbReference type="OrthoDB" id="9762169at2"/>
<dbReference type="Proteomes" id="UP000001409">
    <property type="component" value="Chromosome"/>
</dbReference>
<dbReference type="GO" id="GO:0005524">
    <property type="term" value="F:ATP binding"/>
    <property type="evidence" value="ECO:0007669"/>
    <property type="project" value="UniProtKB-KW"/>
</dbReference>
<dbReference type="GO" id="GO:0106310">
    <property type="term" value="F:protein serine kinase activity"/>
    <property type="evidence" value="ECO:0007669"/>
    <property type="project" value="RHEA"/>
</dbReference>
<dbReference type="GO" id="GO:0004674">
    <property type="term" value="F:protein serine/threonine kinase activity"/>
    <property type="evidence" value="ECO:0007669"/>
    <property type="project" value="UniProtKB-KW"/>
</dbReference>
<dbReference type="CDD" id="cd06577">
    <property type="entry name" value="PASTA_pknB"/>
    <property type="match status" value="4"/>
</dbReference>
<dbReference type="CDD" id="cd14014">
    <property type="entry name" value="STKc_PknB_like"/>
    <property type="match status" value="1"/>
</dbReference>
<dbReference type="FunFam" id="1.10.510.10:FF:000021">
    <property type="entry name" value="Serine/threonine protein kinase"/>
    <property type="match status" value="1"/>
</dbReference>
<dbReference type="FunFam" id="3.30.200.20:FF:000035">
    <property type="entry name" value="Serine/threonine protein kinase Stk1"/>
    <property type="match status" value="1"/>
</dbReference>
<dbReference type="Gene3D" id="3.30.10.20">
    <property type="match status" value="4"/>
</dbReference>
<dbReference type="Gene3D" id="3.30.200.20">
    <property type="entry name" value="Phosphorylase Kinase, domain 1"/>
    <property type="match status" value="1"/>
</dbReference>
<dbReference type="Gene3D" id="1.10.510.10">
    <property type="entry name" value="Transferase(Phosphotransferase) domain 1"/>
    <property type="match status" value="1"/>
</dbReference>
<dbReference type="InterPro" id="IPR011009">
    <property type="entry name" value="Kinase-like_dom_sf"/>
</dbReference>
<dbReference type="InterPro" id="IPR005543">
    <property type="entry name" value="PASTA_dom"/>
</dbReference>
<dbReference type="InterPro" id="IPR000719">
    <property type="entry name" value="Prot_kinase_dom"/>
</dbReference>
<dbReference type="InterPro" id="IPR017441">
    <property type="entry name" value="Protein_kinase_ATP_BS"/>
</dbReference>
<dbReference type="InterPro" id="IPR008271">
    <property type="entry name" value="Ser/Thr_kinase_AS"/>
</dbReference>
<dbReference type="NCBIfam" id="NF033483">
    <property type="entry name" value="PknB_PASTA_kin"/>
    <property type="match status" value="1"/>
</dbReference>
<dbReference type="PANTHER" id="PTHR43289">
    <property type="entry name" value="MITOGEN-ACTIVATED PROTEIN KINASE KINASE KINASE 20-RELATED"/>
    <property type="match status" value="1"/>
</dbReference>
<dbReference type="PANTHER" id="PTHR43289:SF6">
    <property type="entry name" value="SERINE_THREONINE-PROTEIN KINASE NEKL-3"/>
    <property type="match status" value="1"/>
</dbReference>
<dbReference type="Pfam" id="PF03793">
    <property type="entry name" value="PASTA"/>
    <property type="match status" value="4"/>
</dbReference>
<dbReference type="Pfam" id="PF00069">
    <property type="entry name" value="Pkinase"/>
    <property type="match status" value="1"/>
</dbReference>
<dbReference type="SMART" id="SM00740">
    <property type="entry name" value="PASTA"/>
    <property type="match status" value="3"/>
</dbReference>
<dbReference type="SMART" id="SM00220">
    <property type="entry name" value="S_TKc"/>
    <property type="match status" value="1"/>
</dbReference>
<dbReference type="SUPFAM" id="SSF56112">
    <property type="entry name" value="Protein kinase-like (PK-like)"/>
    <property type="match status" value="1"/>
</dbReference>
<dbReference type="PROSITE" id="PS51178">
    <property type="entry name" value="PASTA"/>
    <property type="match status" value="4"/>
</dbReference>
<dbReference type="PROSITE" id="PS00107">
    <property type="entry name" value="PROTEIN_KINASE_ATP"/>
    <property type="match status" value="1"/>
</dbReference>
<dbReference type="PROSITE" id="PS50011">
    <property type="entry name" value="PROTEIN_KINASE_DOM"/>
    <property type="match status" value="1"/>
</dbReference>
<dbReference type="PROSITE" id="PS00108">
    <property type="entry name" value="PROTEIN_KINASE_ST"/>
    <property type="match status" value="1"/>
</dbReference>
<keyword id="KW-0067">ATP-binding</keyword>
<keyword id="KW-0418">Kinase</keyword>
<keyword id="KW-0547">Nucleotide-binding</keyword>
<keyword id="KW-1185">Reference proteome</keyword>
<keyword id="KW-0677">Repeat</keyword>
<keyword id="KW-0723">Serine/threonine-protein kinase</keyword>
<keyword id="KW-0808">Transferase</keyword>
<feature type="chain" id="PRO_0000171196" description="Probable serine/threonine-protein kinase CE0033">
    <location>
        <begin position="1"/>
        <end position="660"/>
    </location>
</feature>
<feature type="domain" description="Protein kinase" evidence="1">
    <location>
        <begin position="9"/>
        <end position="278"/>
    </location>
</feature>
<feature type="domain" description="PASTA 1" evidence="2">
    <location>
        <begin position="377"/>
        <end position="443"/>
    </location>
</feature>
<feature type="domain" description="PASTA 2" evidence="2">
    <location>
        <begin position="444"/>
        <end position="512"/>
    </location>
</feature>
<feature type="domain" description="PASTA 3" evidence="2">
    <location>
        <begin position="513"/>
        <end position="577"/>
    </location>
</feature>
<feature type="region of interest" description="Disordered" evidence="4">
    <location>
        <begin position="288"/>
        <end position="319"/>
    </location>
</feature>
<feature type="active site" description="Proton acceptor" evidence="1 3">
    <location>
        <position position="136"/>
    </location>
</feature>
<feature type="binding site" evidence="1">
    <location>
        <begin position="15"/>
        <end position="23"/>
    </location>
    <ligand>
        <name>ATP</name>
        <dbReference type="ChEBI" id="CHEBI:30616"/>
    </ligand>
</feature>
<feature type="binding site" evidence="1">
    <location>
        <position position="38"/>
    </location>
    <ligand>
        <name>ATP</name>
        <dbReference type="ChEBI" id="CHEBI:30616"/>
    </ligand>
</feature>
<proteinExistence type="inferred from homology"/>
<gene>
    <name type="ordered locus">CE0033</name>
</gene>
<organism>
    <name type="scientific">Corynebacterium efficiens (strain DSM 44549 / YS-314 / AJ 12310 / JCM 11189 / NBRC 100395)</name>
    <dbReference type="NCBI Taxonomy" id="196164"/>
    <lineage>
        <taxon>Bacteria</taxon>
        <taxon>Bacillati</taxon>
        <taxon>Actinomycetota</taxon>
        <taxon>Actinomycetes</taxon>
        <taxon>Mycobacteriales</taxon>
        <taxon>Corynebacteriaceae</taxon>
        <taxon>Corynebacterium</taxon>
    </lineage>
</organism>
<evidence type="ECO:0000255" key="1">
    <source>
        <dbReference type="PROSITE-ProRule" id="PRU00159"/>
    </source>
</evidence>
<evidence type="ECO:0000255" key="2">
    <source>
        <dbReference type="PROSITE-ProRule" id="PRU00528"/>
    </source>
</evidence>
<evidence type="ECO:0000255" key="3">
    <source>
        <dbReference type="PROSITE-ProRule" id="PRU10027"/>
    </source>
</evidence>
<evidence type="ECO:0000256" key="4">
    <source>
        <dbReference type="SAM" id="MobiDB-lite"/>
    </source>
</evidence>